<protein>
    <recommendedName>
        <fullName>Poly-beta-1,6-N-acetyl-D-glucosamine synthesis protein IcaD</fullName>
        <shortName>PGA synthesis protein IcaD</shortName>
        <shortName>Poly-beta-1,6-GlcNAc synthesis protein IcaD</shortName>
    </recommendedName>
    <alternativeName>
        <fullName>Biofilm polysaccharide intercellular adhesin synthesis protein IcaD</fullName>
        <shortName>Biofilm PIA synthesis protein IcaD</shortName>
    </alternativeName>
    <alternativeName>
        <fullName>Intercellular adhesion protein D</fullName>
    </alternativeName>
</protein>
<accession>Q7A2K4</accession>
<sequence>MVKPRQREYPTLKSSLNIVRETALIAISCVFWIYCLVVLLVYIGTIFEIHDESINTIRVALNIENTEILDIFETMGIFAIIIFVFFTISILIQKWQRGRES</sequence>
<evidence type="ECO:0000250" key="1"/>
<evidence type="ECO:0000255" key="2"/>
<evidence type="ECO:0000305" key="3"/>
<dbReference type="EMBL" id="BA000017">
    <property type="protein sequence ID" value="BAB58829.1"/>
    <property type="molecule type" value="Genomic_DNA"/>
</dbReference>
<dbReference type="RefSeq" id="WP_000240580.1">
    <property type="nucleotide sequence ID" value="NC_002758.2"/>
</dbReference>
<dbReference type="KEGG" id="sav:SAV2667"/>
<dbReference type="HOGENOM" id="CLU_2289916_0_0_9"/>
<dbReference type="Proteomes" id="UP000002481">
    <property type="component" value="Chromosome"/>
</dbReference>
<dbReference type="GO" id="GO:0005886">
    <property type="term" value="C:plasma membrane"/>
    <property type="evidence" value="ECO:0007669"/>
    <property type="project" value="UniProtKB-SubCell"/>
</dbReference>
<dbReference type="InterPro" id="IPR020510">
    <property type="entry name" value="IcaD"/>
</dbReference>
<dbReference type="NCBIfam" id="TIGR03932">
    <property type="entry name" value="PIA_icaD"/>
    <property type="match status" value="1"/>
</dbReference>
<feature type="chain" id="PRO_0000084135" description="Poly-beta-1,6-N-acetyl-D-glucosamine synthesis protein IcaD">
    <location>
        <begin position="1"/>
        <end position="101"/>
    </location>
</feature>
<feature type="transmembrane region" description="Helical" evidence="2">
    <location>
        <begin position="24"/>
        <end position="46"/>
    </location>
</feature>
<feature type="transmembrane region" description="Helical" evidence="2">
    <location>
        <begin position="71"/>
        <end position="93"/>
    </location>
</feature>
<gene>
    <name type="primary">icaD</name>
    <name type="ordered locus">SAV2667</name>
</gene>
<name>ICAD_STAAM</name>
<proteinExistence type="inferred from homology"/>
<organism>
    <name type="scientific">Staphylococcus aureus (strain Mu50 / ATCC 700699)</name>
    <dbReference type="NCBI Taxonomy" id="158878"/>
    <lineage>
        <taxon>Bacteria</taxon>
        <taxon>Bacillati</taxon>
        <taxon>Bacillota</taxon>
        <taxon>Bacilli</taxon>
        <taxon>Bacillales</taxon>
        <taxon>Staphylococcaceae</taxon>
        <taxon>Staphylococcus</taxon>
    </lineage>
</organism>
<comment type="function">
    <text evidence="1">Necessary for the synthesis of poly-beta-1,6-N-acetyl-D-glucosamine (PNAG, also referred to as PIA), a biofilm adhesin polysaccharide. Is required for full IcaA N-acetylglucosaminyltransferase activity (By similarity).</text>
</comment>
<comment type="subcellular location">
    <subcellularLocation>
        <location evidence="1">Cell membrane</location>
        <topology evidence="1">Multi-pass membrane protein</topology>
    </subcellularLocation>
</comment>
<comment type="similarity">
    <text evidence="3">Belongs to the IcaD family.</text>
</comment>
<reference key="1">
    <citation type="journal article" date="2001" name="Lancet">
        <title>Whole genome sequencing of meticillin-resistant Staphylococcus aureus.</title>
        <authorList>
            <person name="Kuroda M."/>
            <person name="Ohta T."/>
            <person name="Uchiyama I."/>
            <person name="Baba T."/>
            <person name="Yuzawa H."/>
            <person name="Kobayashi I."/>
            <person name="Cui L."/>
            <person name="Oguchi A."/>
            <person name="Aoki K."/>
            <person name="Nagai Y."/>
            <person name="Lian J.-Q."/>
            <person name="Ito T."/>
            <person name="Kanamori M."/>
            <person name="Matsumaru H."/>
            <person name="Maruyama A."/>
            <person name="Murakami H."/>
            <person name="Hosoyama A."/>
            <person name="Mizutani-Ui Y."/>
            <person name="Takahashi N.K."/>
            <person name="Sawano T."/>
            <person name="Inoue R."/>
            <person name="Kaito C."/>
            <person name="Sekimizu K."/>
            <person name="Hirakawa H."/>
            <person name="Kuhara S."/>
            <person name="Goto S."/>
            <person name="Yabuzaki J."/>
            <person name="Kanehisa M."/>
            <person name="Yamashita A."/>
            <person name="Oshima K."/>
            <person name="Furuya K."/>
            <person name="Yoshino C."/>
            <person name="Shiba T."/>
            <person name="Hattori M."/>
            <person name="Ogasawara N."/>
            <person name="Hayashi H."/>
            <person name="Hiramatsu K."/>
        </authorList>
    </citation>
    <scope>NUCLEOTIDE SEQUENCE [LARGE SCALE GENOMIC DNA]</scope>
    <source>
        <strain>Mu50 / ATCC 700699</strain>
    </source>
</reference>
<keyword id="KW-1003">Cell membrane</keyword>
<keyword id="KW-0472">Membrane</keyword>
<keyword id="KW-0812">Transmembrane</keyword>
<keyword id="KW-1133">Transmembrane helix</keyword>